<proteinExistence type="evidence at transcript level"/>
<accession>C0JB49</accession>
<dbReference type="EC" id="4.6.1.-" evidence="4"/>
<dbReference type="EMBL" id="FJ171484">
    <property type="protein sequence ID" value="ACN48980.1"/>
    <property type="molecule type" value="mRNA"/>
</dbReference>
<dbReference type="SMR" id="C0JB49"/>
<dbReference type="GO" id="GO:0005576">
    <property type="term" value="C:extracellular region"/>
    <property type="evidence" value="ECO:0007669"/>
    <property type="project" value="UniProtKB-SubCell"/>
</dbReference>
<dbReference type="GO" id="GO:0016829">
    <property type="term" value="F:lyase activity"/>
    <property type="evidence" value="ECO:0007669"/>
    <property type="project" value="UniProtKB-KW"/>
</dbReference>
<dbReference type="GO" id="GO:0046872">
    <property type="term" value="F:metal ion binding"/>
    <property type="evidence" value="ECO:0007669"/>
    <property type="project" value="UniProtKB-KW"/>
</dbReference>
<dbReference type="GO" id="GO:0008081">
    <property type="term" value="F:phosphoric diester hydrolase activity"/>
    <property type="evidence" value="ECO:0007669"/>
    <property type="project" value="InterPro"/>
</dbReference>
<dbReference type="GO" id="GO:0090729">
    <property type="term" value="F:toxin activity"/>
    <property type="evidence" value="ECO:0007669"/>
    <property type="project" value="UniProtKB-KW"/>
</dbReference>
<dbReference type="GO" id="GO:0031640">
    <property type="term" value="P:killing of cells of another organism"/>
    <property type="evidence" value="ECO:0007669"/>
    <property type="project" value="UniProtKB-KW"/>
</dbReference>
<dbReference type="GO" id="GO:0016042">
    <property type="term" value="P:lipid catabolic process"/>
    <property type="evidence" value="ECO:0007669"/>
    <property type="project" value="UniProtKB-KW"/>
</dbReference>
<dbReference type="CDD" id="cd08576">
    <property type="entry name" value="GDPD_like_SMaseD_PLD"/>
    <property type="match status" value="1"/>
</dbReference>
<dbReference type="Gene3D" id="3.20.20.190">
    <property type="entry name" value="Phosphatidylinositol (PI) phosphodiesterase"/>
    <property type="match status" value="1"/>
</dbReference>
<dbReference type="InterPro" id="IPR017946">
    <property type="entry name" value="PLC-like_Pdiesterase_TIM-brl"/>
</dbReference>
<dbReference type="Pfam" id="PF13653">
    <property type="entry name" value="GDPD_2"/>
    <property type="match status" value="1"/>
</dbReference>
<dbReference type="SUPFAM" id="SSF51695">
    <property type="entry name" value="PLC-like phosphodiesterases"/>
    <property type="match status" value="1"/>
</dbReference>
<keyword id="KW-0204">Cytolysis</keyword>
<keyword id="KW-1061">Dermonecrotic toxin</keyword>
<keyword id="KW-1015">Disulfide bond</keyword>
<keyword id="KW-0354">Hemolysis</keyword>
<keyword id="KW-0442">Lipid degradation</keyword>
<keyword id="KW-0443">Lipid metabolism</keyword>
<keyword id="KW-0456">Lyase</keyword>
<keyword id="KW-0460">Magnesium</keyword>
<keyword id="KW-0479">Metal-binding</keyword>
<keyword id="KW-0964">Secreted</keyword>
<keyword id="KW-0800">Toxin</keyword>
<organism>
    <name type="scientific">Loxosceles spinulosa</name>
    <name type="common">Recluse spider</name>
    <dbReference type="NCBI Taxonomy" id="571532"/>
    <lineage>
        <taxon>Eukaryota</taxon>
        <taxon>Metazoa</taxon>
        <taxon>Ecdysozoa</taxon>
        <taxon>Arthropoda</taxon>
        <taxon>Chelicerata</taxon>
        <taxon>Arachnida</taxon>
        <taxon>Araneae</taxon>
        <taxon>Araneomorphae</taxon>
        <taxon>Haplogynae</taxon>
        <taxon>Scytodoidea</taxon>
        <taxon>Sicariidae</taxon>
        <taxon>Loxosceles</taxon>
    </lineage>
</organism>
<protein>
    <recommendedName>
        <fullName evidence="6">Dermonecrotic toxin LspiSicTox-betaIE1i</fullName>
        <ecNumber evidence="4">4.6.1.-</ecNumber>
    </recommendedName>
    <alternativeName>
        <fullName>Phospholipase D</fullName>
        <shortName>PLD</shortName>
    </alternativeName>
    <alternativeName>
        <fullName>Sphingomyelin phosphodiesterase D</fullName>
        <shortName>SMD</shortName>
        <shortName>SMase D</shortName>
        <shortName>Sphingomyelinase D</shortName>
    </alternativeName>
</protein>
<feature type="chain" id="PRO_0000392856" description="Dermonecrotic toxin LspiSicTox-betaIE1i">
    <location>
        <begin position="1" status="less than"/>
        <end position="273"/>
    </location>
</feature>
<feature type="active site" description="Nucleophile" evidence="5">
    <location>
        <position position="41"/>
    </location>
</feature>
<feature type="binding site" evidence="5">
    <location>
        <position position="25"/>
    </location>
    <ligand>
        <name>Mg(2+)</name>
        <dbReference type="ChEBI" id="CHEBI:18420"/>
    </ligand>
</feature>
<feature type="binding site" evidence="5">
    <location>
        <position position="27"/>
    </location>
    <ligand>
        <name>Mg(2+)</name>
        <dbReference type="ChEBI" id="CHEBI:18420"/>
    </ligand>
</feature>
<feature type="binding site" evidence="5">
    <location>
        <position position="85"/>
    </location>
    <ligand>
        <name>Mg(2+)</name>
        <dbReference type="ChEBI" id="CHEBI:18420"/>
    </ligand>
</feature>
<feature type="disulfide bond" evidence="5">
    <location>
        <begin position="45"/>
        <end position="51"/>
    </location>
</feature>
<feature type="non-terminal residue">
    <location>
        <position position="1"/>
    </location>
</feature>
<name>B1R1_LOXSN</name>
<reference key="1">
    <citation type="journal article" date="2009" name="Mol. Biol. Evol.">
        <title>Molecular evolution, functional variation, and proposed nomenclature of the gene family that includes sphingomyelinase D in sicariid spider venoms.</title>
        <authorList>
            <person name="Binford G.J."/>
            <person name="Bodner M.R."/>
            <person name="Cordes M.H."/>
            <person name="Baldwin K.L."/>
            <person name="Rynerson M.R."/>
            <person name="Burns S.N."/>
            <person name="Zobel-Thropp P.A."/>
        </authorList>
    </citation>
    <scope>NUCLEOTIDE SEQUENCE [MRNA]</scope>
    <scope>NOMENCLATURE</scope>
    <source>
        <strain>Borakalalo</strain>
        <tissue>Venom gland</tissue>
    </source>
</reference>
<evidence type="ECO:0000250" key="1">
    <source>
        <dbReference type="UniProtKB" id="A0A0D4WTV1"/>
    </source>
</evidence>
<evidence type="ECO:0000250" key="2">
    <source>
        <dbReference type="UniProtKB" id="A0A0D4WV12"/>
    </source>
</evidence>
<evidence type="ECO:0000250" key="3">
    <source>
        <dbReference type="UniProtKB" id="P0CE80"/>
    </source>
</evidence>
<evidence type="ECO:0000250" key="4">
    <source>
        <dbReference type="UniProtKB" id="Q4ZFU2"/>
    </source>
</evidence>
<evidence type="ECO:0000250" key="5">
    <source>
        <dbReference type="UniProtKB" id="Q8I914"/>
    </source>
</evidence>
<evidence type="ECO:0000303" key="6">
    <source>
    </source>
</evidence>
<evidence type="ECO:0000305" key="7"/>
<evidence type="ECO:0000305" key="8">
    <source>
    </source>
</evidence>
<sequence>FALAQMVNDLEMVDEFVGKGANGLEIDVTFSSSGQPQYTYHGVPCDCFRSCKRREDFDTYIKYIRHLTTPGDPKFRSNLIMLIFDLKLNGLSQDALRKAGVEMADKLVGNYWQDLAEARAYIVLSMPSIEQSAFVTAFKDELKDFGYDKNLDRIGYDFSGNEDLDETAKVYKQLNINGHIWQADGITNRLPRGDSRLKEAISKRDTPGYQYINKVYTWTIDKASSIANALRLGVDGVMTNYPERVIDALNDSEFSGKFRLATYEDNPWETFKG</sequence>
<comment type="function">
    <text evidence="1 3">Dermonecrotic toxins cleave the phosphodiester linkage between the phosphate and headgroup of certain phospholipids (sphingolipid and lysolipid substrates), forming an alcohol (often choline) and a cyclic phosphate (By similarity). This toxin acts on sphingomyelin (SM) (By similarity). It may also act on ceramide phosphoethanolamine (CPE), lysophosphatidylcholine (LPC) and lysophosphatidylethanolamine (LPE), but not on lysophosphatidylserine (LPS), and lysophosphatidylglycerol (LPG) (By similarity). It acts by transphosphatidylation, releasing exclusively cyclic phosphate products as second products (By similarity). Induces dermonecrosis, hemolysis, increased vascular permeability, edema, inflammatory response, and platelet aggregation (By similarity).</text>
</comment>
<comment type="catalytic activity">
    <reaction evidence="1">
        <text>an N-(acyl)-sphingosylphosphocholine = an N-(acyl)-sphingosyl-1,3-cyclic phosphate + choline</text>
        <dbReference type="Rhea" id="RHEA:60652"/>
        <dbReference type="ChEBI" id="CHEBI:15354"/>
        <dbReference type="ChEBI" id="CHEBI:64583"/>
        <dbReference type="ChEBI" id="CHEBI:143892"/>
    </reaction>
</comment>
<comment type="catalytic activity">
    <reaction evidence="1">
        <text>an N-(acyl)-sphingosylphosphoethanolamine = an N-(acyl)-sphingosyl-1,3-cyclic phosphate + ethanolamine</text>
        <dbReference type="Rhea" id="RHEA:60648"/>
        <dbReference type="ChEBI" id="CHEBI:57603"/>
        <dbReference type="ChEBI" id="CHEBI:143891"/>
        <dbReference type="ChEBI" id="CHEBI:143892"/>
    </reaction>
</comment>
<comment type="catalytic activity">
    <reaction evidence="1">
        <text>a 1-acyl-sn-glycero-3-phosphocholine = a 1-acyl-sn-glycero-2,3-cyclic phosphate + choline</text>
        <dbReference type="Rhea" id="RHEA:60700"/>
        <dbReference type="ChEBI" id="CHEBI:15354"/>
        <dbReference type="ChEBI" id="CHEBI:58168"/>
        <dbReference type="ChEBI" id="CHEBI:143947"/>
    </reaction>
</comment>
<comment type="catalytic activity">
    <reaction evidence="1">
        <text>a 1-acyl-sn-glycero-3-phosphoethanolamine = a 1-acyl-sn-glycero-2,3-cyclic phosphate + ethanolamine</text>
        <dbReference type="Rhea" id="RHEA:60704"/>
        <dbReference type="ChEBI" id="CHEBI:57603"/>
        <dbReference type="ChEBI" id="CHEBI:64381"/>
        <dbReference type="ChEBI" id="CHEBI:143947"/>
    </reaction>
</comment>
<comment type="cofactor">
    <cofactor evidence="5">
        <name>Mg(2+)</name>
        <dbReference type="ChEBI" id="CHEBI:18420"/>
    </cofactor>
    <text evidence="5">Binds 1 Mg(2+) ion per subunit.</text>
</comment>
<comment type="subcellular location">
    <subcellularLocation>
        <location evidence="8">Secreted</location>
    </subcellularLocation>
</comment>
<comment type="tissue specificity">
    <text evidence="8">Expressed by the venom gland.</text>
</comment>
<comment type="similarity">
    <text evidence="7">Belongs to the arthropod phospholipase D family. Class I subfamily.</text>
</comment>
<comment type="caution">
    <text evidence="1 2 4">The most common activity assay for dermonecrotic toxins detects enzymatic activity by monitoring choline release from substrate. Liberation of choline from sphingomyelin (SM) or lysophosphatidylcholine (LPC) is commonly assumed to result from substrate hydrolysis, giving either ceramide-1-phosphate (C1P) or lysophosphatidic acid (LPA), respectively, as a second product. However, two studies from Lajoie and colleagues (2013 and 2015) report the observation of exclusive formation of cyclic phosphate products as second products, resulting from intramolecular transphosphatidylation. Cyclic phosphates have vastly different biological properties from their monoester counterparts, and they may be relevant to the pathology of brown spider envenomation.</text>
</comment>